<keyword id="KW-1185">Reference proteome</keyword>
<sequence length="103" mass="12121">MDIQTRKSILWDAFEELKTRWGADEKFLERVEEEELTVDGLPESKVRDLIELREKYQLDELEFLFIVGTAVGLYQGQKQVKEILQRRMSALNEFVSSLVGREL</sequence>
<reference key="1">
    <citation type="journal article" date="1997" name="Nature">
        <title>The complete genome sequence of the hyperthermophilic, sulphate-reducing archaeon Archaeoglobus fulgidus.</title>
        <authorList>
            <person name="Klenk H.-P."/>
            <person name="Clayton R.A."/>
            <person name="Tomb J.-F."/>
            <person name="White O."/>
            <person name="Nelson K.E."/>
            <person name="Ketchum K.A."/>
            <person name="Dodson R.J."/>
            <person name="Gwinn M.L."/>
            <person name="Hickey E.K."/>
            <person name="Peterson J.D."/>
            <person name="Richardson D.L."/>
            <person name="Kerlavage A.R."/>
            <person name="Graham D.E."/>
            <person name="Kyrpides N.C."/>
            <person name="Fleischmann R.D."/>
            <person name="Quackenbush J."/>
            <person name="Lee N.H."/>
            <person name="Sutton G.G."/>
            <person name="Gill S.R."/>
            <person name="Kirkness E.F."/>
            <person name="Dougherty B.A."/>
            <person name="McKenney K."/>
            <person name="Adams M.D."/>
            <person name="Loftus B.J."/>
            <person name="Peterson S.N."/>
            <person name="Reich C.I."/>
            <person name="McNeil L.K."/>
            <person name="Badger J.H."/>
            <person name="Glodek A."/>
            <person name="Zhou L."/>
            <person name="Overbeek R."/>
            <person name="Gocayne J.D."/>
            <person name="Weidman J.F."/>
            <person name="McDonald L.A."/>
            <person name="Utterback T.R."/>
            <person name="Cotton M.D."/>
            <person name="Spriggs T."/>
            <person name="Artiach P."/>
            <person name="Kaine B.P."/>
            <person name="Sykes S.M."/>
            <person name="Sadow P.W."/>
            <person name="D'Andrea K.P."/>
            <person name="Bowman C."/>
            <person name="Fujii C."/>
            <person name="Garland S.A."/>
            <person name="Mason T.M."/>
            <person name="Olsen G.J."/>
            <person name="Fraser C.M."/>
            <person name="Smith H.O."/>
            <person name="Woese C.R."/>
            <person name="Venter J.C."/>
        </authorList>
    </citation>
    <scope>NUCLEOTIDE SEQUENCE [LARGE SCALE GENOMIC DNA]</scope>
    <source>
        <strain>ATCC 49558 / DSM 4304 / JCM 9628 / NBRC 100126 / VC-16</strain>
    </source>
</reference>
<gene>
    <name type="ordered locus">AF_1731</name>
</gene>
<accession>O28543</accession>
<name>Y1731_ARCFU</name>
<feature type="chain" id="PRO_0000128052" description="Uncharacterized protein AF_1731">
    <location>
        <begin position="1"/>
        <end position="103"/>
    </location>
</feature>
<protein>
    <recommendedName>
        <fullName>Uncharacterized protein AF_1731</fullName>
    </recommendedName>
</protein>
<organism>
    <name type="scientific">Archaeoglobus fulgidus (strain ATCC 49558 / DSM 4304 / JCM 9628 / NBRC 100126 / VC-16)</name>
    <dbReference type="NCBI Taxonomy" id="224325"/>
    <lineage>
        <taxon>Archaea</taxon>
        <taxon>Methanobacteriati</taxon>
        <taxon>Methanobacteriota</taxon>
        <taxon>Archaeoglobi</taxon>
        <taxon>Archaeoglobales</taxon>
        <taxon>Archaeoglobaceae</taxon>
        <taxon>Archaeoglobus</taxon>
    </lineage>
</organism>
<proteinExistence type="predicted"/>
<dbReference type="EMBL" id="AE000782">
    <property type="protein sequence ID" value="AAB89522.1"/>
    <property type="molecule type" value="Genomic_DNA"/>
</dbReference>
<dbReference type="PIR" id="B69466">
    <property type="entry name" value="B69466"/>
</dbReference>
<dbReference type="RefSeq" id="WP_010879227.1">
    <property type="nucleotide sequence ID" value="NC_000917.1"/>
</dbReference>
<dbReference type="SMR" id="O28543"/>
<dbReference type="STRING" id="224325.AF_1731"/>
<dbReference type="PaxDb" id="224325-AF_1731"/>
<dbReference type="EnsemblBacteria" id="AAB89522">
    <property type="protein sequence ID" value="AAB89522"/>
    <property type="gene ID" value="AF_1731"/>
</dbReference>
<dbReference type="KEGG" id="afu:AF_1731"/>
<dbReference type="eggNOG" id="arCOG15027">
    <property type="taxonomic scope" value="Archaea"/>
</dbReference>
<dbReference type="HOGENOM" id="CLU_2257214_0_0_2"/>
<dbReference type="OrthoDB" id="378697at2157"/>
<dbReference type="Proteomes" id="UP000002199">
    <property type="component" value="Chromosome"/>
</dbReference>